<gene>
    <name evidence="1" type="primary">plsX</name>
    <name type="ordered locus">DNO_1206</name>
</gene>
<accession>A5EXD6</accession>
<comment type="function">
    <text evidence="1">Catalyzes the reversible formation of acyl-phosphate (acyl-PO(4)) from acyl-[acyl-carrier-protein] (acyl-ACP). This enzyme utilizes acyl-ACP as fatty acyl donor, but not acyl-CoA.</text>
</comment>
<comment type="catalytic activity">
    <reaction evidence="1">
        <text>a fatty acyl-[ACP] + phosphate = an acyl phosphate + holo-[ACP]</text>
        <dbReference type="Rhea" id="RHEA:42292"/>
        <dbReference type="Rhea" id="RHEA-COMP:9685"/>
        <dbReference type="Rhea" id="RHEA-COMP:14125"/>
        <dbReference type="ChEBI" id="CHEBI:43474"/>
        <dbReference type="ChEBI" id="CHEBI:59918"/>
        <dbReference type="ChEBI" id="CHEBI:64479"/>
        <dbReference type="ChEBI" id="CHEBI:138651"/>
        <dbReference type="EC" id="2.3.1.274"/>
    </reaction>
</comment>
<comment type="pathway">
    <text evidence="1">Lipid metabolism; phospholipid metabolism.</text>
</comment>
<comment type="subunit">
    <text evidence="1">Homodimer. Probably interacts with PlsY.</text>
</comment>
<comment type="subcellular location">
    <subcellularLocation>
        <location evidence="1">Cytoplasm</location>
    </subcellularLocation>
    <text evidence="1">Associated with the membrane possibly through PlsY.</text>
</comment>
<comment type="similarity">
    <text evidence="1">Belongs to the PlsX family.</text>
</comment>
<name>PLSX_DICNV</name>
<sequence>MIKSDIASTVPIIAIDAMGGDVGLDTTLAAVLSVKNQYPALKLILVGNQSIIEKHSLFPQIASQMEIVHAEQIVAMDESPSSVLRHKNDSSMWRALELVQQGKADACVSAGNTGALMGCARFILKMLPNISRPAICSTVPNRYGHVHWLDLGANVSAKPEQLKQFAIMGSELSKAVDNIASPTVGLLNVGSEAIKGNDIVKEANTLISATDLNYVGYVEGNDLFLRKDLNVVVCDGFVGNVALKTVEGIAKFIQYGMEAEFKRSFFSRLTALVALPALKRLKKRIDPRMYNGATLLGLQGLVIKSHGNADPIAFANAINLARLEVENNVLHRICEQLQLNPEHDQ</sequence>
<dbReference type="EC" id="2.3.1.274" evidence="1"/>
<dbReference type="EMBL" id="CP000513">
    <property type="protein sequence ID" value="ABQ13672.1"/>
    <property type="molecule type" value="Genomic_DNA"/>
</dbReference>
<dbReference type="RefSeq" id="WP_012031509.1">
    <property type="nucleotide sequence ID" value="NC_009446.1"/>
</dbReference>
<dbReference type="SMR" id="A5EXD6"/>
<dbReference type="STRING" id="246195.DNO_1206"/>
<dbReference type="KEGG" id="dno:DNO_1206"/>
<dbReference type="eggNOG" id="COG0416">
    <property type="taxonomic scope" value="Bacteria"/>
</dbReference>
<dbReference type="HOGENOM" id="CLU_039379_1_0_6"/>
<dbReference type="OrthoDB" id="9806408at2"/>
<dbReference type="UniPathway" id="UPA00085"/>
<dbReference type="Proteomes" id="UP000000248">
    <property type="component" value="Chromosome"/>
</dbReference>
<dbReference type="GO" id="GO:0005737">
    <property type="term" value="C:cytoplasm"/>
    <property type="evidence" value="ECO:0007669"/>
    <property type="project" value="UniProtKB-SubCell"/>
</dbReference>
<dbReference type="GO" id="GO:0043811">
    <property type="term" value="F:phosphate:acyl-[acyl carrier protein] acyltransferase activity"/>
    <property type="evidence" value="ECO:0007669"/>
    <property type="project" value="UniProtKB-UniRule"/>
</dbReference>
<dbReference type="GO" id="GO:0006633">
    <property type="term" value="P:fatty acid biosynthetic process"/>
    <property type="evidence" value="ECO:0007669"/>
    <property type="project" value="UniProtKB-UniRule"/>
</dbReference>
<dbReference type="GO" id="GO:0008654">
    <property type="term" value="P:phospholipid biosynthetic process"/>
    <property type="evidence" value="ECO:0007669"/>
    <property type="project" value="UniProtKB-KW"/>
</dbReference>
<dbReference type="Gene3D" id="3.40.718.10">
    <property type="entry name" value="Isopropylmalate Dehydrogenase"/>
    <property type="match status" value="1"/>
</dbReference>
<dbReference type="HAMAP" id="MF_00019">
    <property type="entry name" value="PlsX"/>
    <property type="match status" value="1"/>
</dbReference>
<dbReference type="InterPro" id="IPR003664">
    <property type="entry name" value="FA_synthesis"/>
</dbReference>
<dbReference type="InterPro" id="IPR012281">
    <property type="entry name" value="Phospholipid_synth_PlsX-like"/>
</dbReference>
<dbReference type="NCBIfam" id="TIGR00182">
    <property type="entry name" value="plsX"/>
    <property type="match status" value="1"/>
</dbReference>
<dbReference type="PANTHER" id="PTHR30100">
    <property type="entry name" value="FATTY ACID/PHOSPHOLIPID SYNTHESIS PROTEIN PLSX"/>
    <property type="match status" value="1"/>
</dbReference>
<dbReference type="PANTHER" id="PTHR30100:SF1">
    <property type="entry name" value="PHOSPHATE ACYLTRANSFERASE"/>
    <property type="match status" value="1"/>
</dbReference>
<dbReference type="Pfam" id="PF02504">
    <property type="entry name" value="FA_synthesis"/>
    <property type="match status" value="1"/>
</dbReference>
<dbReference type="PIRSF" id="PIRSF002465">
    <property type="entry name" value="Phsphlp_syn_PlsX"/>
    <property type="match status" value="1"/>
</dbReference>
<dbReference type="SUPFAM" id="SSF53659">
    <property type="entry name" value="Isocitrate/Isopropylmalate dehydrogenase-like"/>
    <property type="match status" value="1"/>
</dbReference>
<reference key="1">
    <citation type="journal article" date="2007" name="Nat. Biotechnol.">
        <title>Genome sequence and identification of candidate vaccine antigens from the animal pathogen Dichelobacter nodosus.</title>
        <authorList>
            <person name="Myers G.S.A."/>
            <person name="Parker D."/>
            <person name="Al-Hasani K."/>
            <person name="Kennan R.M."/>
            <person name="Seemann T."/>
            <person name="Ren Q."/>
            <person name="Badger J.H."/>
            <person name="Selengut J.D."/>
            <person name="Deboy R.T."/>
            <person name="Tettelin H."/>
            <person name="Boyce J.D."/>
            <person name="McCarl V.P."/>
            <person name="Han X."/>
            <person name="Nelson W.C."/>
            <person name="Madupu R."/>
            <person name="Mohamoud Y."/>
            <person name="Holley T."/>
            <person name="Fedorova N."/>
            <person name="Khouri H."/>
            <person name="Bottomley S.P."/>
            <person name="Whittington R.J."/>
            <person name="Adler B."/>
            <person name="Songer J.G."/>
            <person name="Rood J.I."/>
            <person name="Paulsen I.T."/>
        </authorList>
    </citation>
    <scope>NUCLEOTIDE SEQUENCE [LARGE SCALE GENOMIC DNA]</scope>
    <source>
        <strain>VCS1703A</strain>
    </source>
</reference>
<keyword id="KW-0963">Cytoplasm</keyword>
<keyword id="KW-0444">Lipid biosynthesis</keyword>
<keyword id="KW-0443">Lipid metabolism</keyword>
<keyword id="KW-0594">Phospholipid biosynthesis</keyword>
<keyword id="KW-1208">Phospholipid metabolism</keyword>
<keyword id="KW-1185">Reference proteome</keyword>
<keyword id="KW-0808">Transferase</keyword>
<evidence type="ECO:0000255" key="1">
    <source>
        <dbReference type="HAMAP-Rule" id="MF_00019"/>
    </source>
</evidence>
<protein>
    <recommendedName>
        <fullName evidence="1">Phosphate acyltransferase</fullName>
        <ecNumber evidence="1">2.3.1.274</ecNumber>
    </recommendedName>
    <alternativeName>
        <fullName evidence="1">Acyl-ACP phosphotransacylase</fullName>
    </alternativeName>
    <alternativeName>
        <fullName evidence="1">Acyl-[acyl-carrier-protein]--phosphate acyltransferase</fullName>
    </alternativeName>
    <alternativeName>
        <fullName evidence="1">Phosphate-acyl-ACP acyltransferase</fullName>
    </alternativeName>
</protein>
<feature type="chain" id="PRO_0000329223" description="Phosphate acyltransferase">
    <location>
        <begin position="1"/>
        <end position="345"/>
    </location>
</feature>
<organism>
    <name type="scientific">Dichelobacter nodosus (strain VCS1703A)</name>
    <dbReference type="NCBI Taxonomy" id="246195"/>
    <lineage>
        <taxon>Bacteria</taxon>
        <taxon>Pseudomonadati</taxon>
        <taxon>Pseudomonadota</taxon>
        <taxon>Gammaproteobacteria</taxon>
        <taxon>Cardiobacteriales</taxon>
        <taxon>Cardiobacteriaceae</taxon>
        <taxon>Dichelobacter</taxon>
    </lineage>
</organism>
<proteinExistence type="inferred from homology"/>